<dbReference type="EMBL" id="BC056527">
    <property type="protein sequence ID" value="AAH56527.1"/>
    <property type="molecule type" value="mRNA"/>
</dbReference>
<dbReference type="EMBL" id="BC065617">
    <property type="protein sequence ID" value="AAH65617.1"/>
    <property type="molecule type" value="mRNA"/>
</dbReference>
<dbReference type="RefSeq" id="NP_991119.1">
    <property type="nucleotide sequence ID" value="NM_205556.1"/>
</dbReference>
<dbReference type="SMR" id="Q6P0H6"/>
<dbReference type="FunCoup" id="Q6P0H6">
    <property type="interactions" value="2868"/>
</dbReference>
<dbReference type="STRING" id="7955.ENSDARP00000064214"/>
<dbReference type="PaxDb" id="7955-ENSDARP00000064214"/>
<dbReference type="Ensembl" id="ENSDART00000064215">
    <property type="protein sequence ID" value="ENSDARP00000064214"/>
    <property type="gene ID" value="ENSDARG00000043732"/>
</dbReference>
<dbReference type="GeneID" id="325592"/>
<dbReference type="KEGG" id="dre:325592"/>
<dbReference type="AGR" id="ZFIN:ZDB-GENE-030131-4317"/>
<dbReference type="CTD" id="51138"/>
<dbReference type="ZFIN" id="ZDB-GENE-030131-4317">
    <property type="gene designation" value="cops4"/>
</dbReference>
<dbReference type="eggNOG" id="KOG1497">
    <property type="taxonomic scope" value="Eukaryota"/>
</dbReference>
<dbReference type="HOGENOM" id="CLU_028132_1_0_1"/>
<dbReference type="InParanoid" id="Q6P0H6"/>
<dbReference type="OrthoDB" id="295656at2759"/>
<dbReference type="PhylomeDB" id="Q6P0H6"/>
<dbReference type="TreeFam" id="TF101147"/>
<dbReference type="Reactome" id="R-DRE-8856825">
    <property type="pathway name" value="Cargo recognition for clathrin-mediated endocytosis"/>
</dbReference>
<dbReference type="Reactome" id="R-DRE-8951664">
    <property type="pathway name" value="Neddylation"/>
</dbReference>
<dbReference type="PRO" id="PR:Q6P0H6"/>
<dbReference type="Proteomes" id="UP000000437">
    <property type="component" value="Chromosome 10"/>
</dbReference>
<dbReference type="Bgee" id="ENSDARG00000043732">
    <property type="expression patterns" value="Expressed in testis and 28 other cell types or tissues"/>
</dbReference>
<dbReference type="ExpressionAtlas" id="Q6P0H6">
    <property type="expression patterns" value="baseline"/>
</dbReference>
<dbReference type="GO" id="GO:0008180">
    <property type="term" value="C:COP9 signalosome"/>
    <property type="evidence" value="ECO:0000318"/>
    <property type="project" value="GO_Central"/>
</dbReference>
<dbReference type="GO" id="GO:0008021">
    <property type="term" value="C:synaptic vesicle"/>
    <property type="evidence" value="ECO:0007669"/>
    <property type="project" value="UniProtKB-SubCell"/>
</dbReference>
<dbReference type="FunFam" id="1.10.10.10:FF:000130">
    <property type="entry name" value="COP9 signalosome complex subunit 4"/>
    <property type="match status" value="1"/>
</dbReference>
<dbReference type="Gene3D" id="1.25.40.10">
    <property type="entry name" value="Tetratricopeptide repeat domain"/>
    <property type="match status" value="1"/>
</dbReference>
<dbReference type="Gene3D" id="1.10.10.10">
    <property type="entry name" value="Winged helix-like DNA-binding domain superfamily/Winged helix DNA-binding domain"/>
    <property type="match status" value="1"/>
</dbReference>
<dbReference type="InterPro" id="IPR041406">
    <property type="entry name" value="CSN4_HTH"/>
</dbReference>
<dbReference type="InterPro" id="IPR000717">
    <property type="entry name" value="PCI_dom"/>
</dbReference>
<dbReference type="InterPro" id="IPR054559">
    <property type="entry name" value="PSMD12-CSN4-like_N"/>
</dbReference>
<dbReference type="InterPro" id="IPR040134">
    <property type="entry name" value="PSMD12/CSN4"/>
</dbReference>
<dbReference type="InterPro" id="IPR011990">
    <property type="entry name" value="TPR-like_helical_dom_sf"/>
</dbReference>
<dbReference type="InterPro" id="IPR036388">
    <property type="entry name" value="WH-like_DNA-bd_sf"/>
</dbReference>
<dbReference type="InterPro" id="IPR036390">
    <property type="entry name" value="WH_DNA-bd_sf"/>
</dbReference>
<dbReference type="PANTHER" id="PTHR10855">
    <property type="entry name" value="26S PROTEASOME NON-ATPASE REGULATORY SUBUNIT 12/COP9 SIGNALOSOME COMPLEX SUBUNIT 4"/>
    <property type="match status" value="1"/>
</dbReference>
<dbReference type="PANTHER" id="PTHR10855:SF2">
    <property type="entry name" value="COP9 SIGNALOSOME COMPLEX SUBUNIT 4"/>
    <property type="match status" value="1"/>
</dbReference>
<dbReference type="Pfam" id="PF18420">
    <property type="entry name" value="CSN4_RPN5_eIF3a"/>
    <property type="match status" value="1"/>
</dbReference>
<dbReference type="Pfam" id="PF01399">
    <property type="entry name" value="PCI"/>
    <property type="match status" value="1"/>
</dbReference>
<dbReference type="Pfam" id="PF22241">
    <property type="entry name" value="PSMD12-CSN4_N"/>
    <property type="match status" value="1"/>
</dbReference>
<dbReference type="SMART" id="SM00088">
    <property type="entry name" value="PINT"/>
    <property type="match status" value="1"/>
</dbReference>
<dbReference type="SUPFAM" id="SSF46785">
    <property type="entry name" value="Winged helix' DNA-binding domain"/>
    <property type="match status" value="1"/>
</dbReference>
<dbReference type="PROSITE" id="PS50250">
    <property type="entry name" value="PCI"/>
    <property type="match status" value="1"/>
</dbReference>
<evidence type="ECO:0000250" key="1">
    <source>
        <dbReference type="UniProtKB" id="Q9BT78"/>
    </source>
</evidence>
<evidence type="ECO:0000255" key="2">
    <source>
        <dbReference type="PROSITE-ProRule" id="PRU01185"/>
    </source>
</evidence>
<evidence type="ECO:0000305" key="3"/>
<reference key="1">
    <citation type="submission" date="2004-01" db="EMBL/GenBank/DDBJ databases">
        <authorList>
            <consortium name="NIH - Zebrafish Gene Collection (ZGC) project"/>
        </authorList>
    </citation>
    <scope>NUCLEOTIDE SEQUENCE [LARGE SCALE MRNA]</scope>
    <source>
        <tissue>Kidney</tissue>
    </source>
</reference>
<comment type="function">
    <text evidence="1">Component of the COP9 signalosome complex (CSN), a complex involved in various cellular and developmental processes (By similarity). The CSN complex is an essential regulator of the ubiquitin (Ubl) conjugation pathway by mediating the deneddylation of the cullin subunits of E3 ligase complexes, leading to modify the Ubl ligase activity (By similarity).</text>
</comment>
<comment type="subunit">
    <text evidence="1">Component of the CSN complex, probably composed of cops1, cops2, cops3, cops4, cops5, cops6, cops7, cops8 and cops9.</text>
</comment>
<comment type="subcellular location">
    <subcellularLocation>
        <location evidence="1">Cytoplasm</location>
    </subcellularLocation>
    <subcellularLocation>
        <location evidence="1">Nucleus</location>
    </subcellularLocation>
    <subcellularLocation>
        <location evidence="1">Cytoplasmic vesicle</location>
        <location evidence="1">Secretory vesicle</location>
        <location evidence="1">Synaptic vesicle</location>
    </subcellularLocation>
</comment>
<comment type="similarity">
    <text evidence="3">Belongs to the CSN4 family.</text>
</comment>
<protein>
    <recommendedName>
        <fullName>COP9 signalosome complex subunit 4</fullName>
        <shortName>Signalosome subunit 4</shortName>
    </recommendedName>
</protein>
<keyword id="KW-0963">Cytoplasm</keyword>
<keyword id="KW-0968">Cytoplasmic vesicle</keyword>
<keyword id="KW-0539">Nucleus</keyword>
<keyword id="KW-1185">Reference proteome</keyword>
<keyword id="KW-0736">Signalosome</keyword>
<keyword id="KW-0770">Synapse</keyword>
<name>CSN4_DANRE</name>
<feature type="chain" id="PRO_0000120990" description="COP9 signalosome complex subunit 4">
    <location>
        <begin position="1"/>
        <end position="406"/>
    </location>
</feature>
<feature type="domain" description="PCI" evidence="2">
    <location>
        <begin position="197"/>
        <end position="366"/>
    </location>
</feature>
<feature type="sequence conflict" description="In Ref. 1; AAH56527." evidence="3" ref="1">
    <original>S</original>
    <variation>SS</variation>
    <location>
        <position position="298"/>
    </location>
</feature>
<accession>Q6P0H6</accession>
<accession>Q6PHJ7</accession>
<sequence length="406" mass="46346">MASGVRQELAQLMNSSGSHKDLAGKYRQILEKALQFTDAEQLEALKAFVEAMVNENVSLVISRQLLTDFCAHLPNLPDDIAKVVCHFTLEKIQPRVISFEEQVASIRQHLATIYEKQEDWRNAAQVLVGIPLETGQKQYNVDYKLDTYLKIARLYLEDDDPVQAEAYINRASLLQNESTNEQLQIHYKVCYARVLDYRRKFIEAAQRYNELSYKSIVHETERLEALKHALHCTILASAGQQRSRMLATLFKDERCQQLAAYGILEKMYLDRIIRGNQLQEFAAMLMPHQKATTADGSSILDRAVIEHNLLSASKLYNNITFEELGALLEIPPAKAEKIASQMITEGRMNGFIDQIDGIVHFETREPLPTWDKQIQSLCFQVNNLLEKISQTAPEWTAQAIEAQMSQ</sequence>
<gene>
    <name type="primary">cops4</name>
    <name type="synonym">csn4</name>
    <name type="ORF">zgc:77137</name>
</gene>
<proteinExistence type="evidence at transcript level"/>
<organism>
    <name type="scientific">Danio rerio</name>
    <name type="common">Zebrafish</name>
    <name type="synonym">Brachydanio rerio</name>
    <dbReference type="NCBI Taxonomy" id="7955"/>
    <lineage>
        <taxon>Eukaryota</taxon>
        <taxon>Metazoa</taxon>
        <taxon>Chordata</taxon>
        <taxon>Craniata</taxon>
        <taxon>Vertebrata</taxon>
        <taxon>Euteleostomi</taxon>
        <taxon>Actinopterygii</taxon>
        <taxon>Neopterygii</taxon>
        <taxon>Teleostei</taxon>
        <taxon>Ostariophysi</taxon>
        <taxon>Cypriniformes</taxon>
        <taxon>Danionidae</taxon>
        <taxon>Danioninae</taxon>
        <taxon>Danio</taxon>
    </lineage>
</organism>